<dbReference type="EMBL" id="CP000139">
    <property type="protein sequence ID" value="ABR39554.1"/>
    <property type="molecule type" value="Genomic_DNA"/>
</dbReference>
<dbReference type="RefSeq" id="WP_005839876.1">
    <property type="nucleotide sequence ID" value="NZ_JANSWM010000118.1"/>
</dbReference>
<dbReference type="SMR" id="A6L1J0"/>
<dbReference type="STRING" id="435590.BVU_1879"/>
<dbReference type="PaxDb" id="435590-BVU_1879"/>
<dbReference type="GeneID" id="5302845"/>
<dbReference type="KEGG" id="bvu:BVU_1879"/>
<dbReference type="eggNOG" id="COG0792">
    <property type="taxonomic scope" value="Bacteria"/>
</dbReference>
<dbReference type="HOGENOM" id="CLU_115353_2_1_10"/>
<dbReference type="BioCyc" id="BVUL435590:G1G59-1968-MONOMER"/>
<dbReference type="Proteomes" id="UP000002861">
    <property type="component" value="Chromosome"/>
</dbReference>
<dbReference type="GO" id="GO:0003676">
    <property type="term" value="F:nucleic acid binding"/>
    <property type="evidence" value="ECO:0007669"/>
    <property type="project" value="InterPro"/>
</dbReference>
<dbReference type="CDD" id="cd20736">
    <property type="entry name" value="PoNe_Nuclease"/>
    <property type="match status" value="1"/>
</dbReference>
<dbReference type="Gene3D" id="3.40.1350.10">
    <property type="match status" value="1"/>
</dbReference>
<dbReference type="HAMAP" id="MF_00048">
    <property type="entry name" value="UPF0102"/>
    <property type="match status" value="1"/>
</dbReference>
<dbReference type="InterPro" id="IPR011335">
    <property type="entry name" value="Restrct_endonuc-II-like"/>
</dbReference>
<dbReference type="InterPro" id="IPR011856">
    <property type="entry name" value="tRNA_endonuc-like_dom_sf"/>
</dbReference>
<dbReference type="InterPro" id="IPR003509">
    <property type="entry name" value="UPF0102_YraN-like"/>
</dbReference>
<dbReference type="NCBIfam" id="NF009150">
    <property type="entry name" value="PRK12497.1-3"/>
    <property type="match status" value="1"/>
</dbReference>
<dbReference type="PANTHER" id="PTHR34039">
    <property type="entry name" value="UPF0102 PROTEIN YRAN"/>
    <property type="match status" value="1"/>
</dbReference>
<dbReference type="PANTHER" id="PTHR34039:SF1">
    <property type="entry name" value="UPF0102 PROTEIN YRAN"/>
    <property type="match status" value="1"/>
</dbReference>
<dbReference type="Pfam" id="PF02021">
    <property type="entry name" value="UPF0102"/>
    <property type="match status" value="1"/>
</dbReference>
<dbReference type="SUPFAM" id="SSF52980">
    <property type="entry name" value="Restriction endonuclease-like"/>
    <property type="match status" value="1"/>
</dbReference>
<gene>
    <name type="ordered locus">BVU_1879</name>
</gene>
<evidence type="ECO:0000255" key="1">
    <source>
        <dbReference type="HAMAP-Rule" id="MF_00048"/>
    </source>
</evidence>
<reference key="1">
    <citation type="journal article" date="2007" name="PLoS Biol.">
        <title>Evolution of symbiotic bacteria in the distal human intestine.</title>
        <authorList>
            <person name="Xu J."/>
            <person name="Mahowald M.A."/>
            <person name="Ley R.E."/>
            <person name="Lozupone C.A."/>
            <person name="Hamady M."/>
            <person name="Martens E.C."/>
            <person name="Henrissat B."/>
            <person name="Coutinho P.M."/>
            <person name="Minx P."/>
            <person name="Latreille P."/>
            <person name="Cordum H."/>
            <person name="Van Brunt A."/>
            <person name="Kim K."/>
            <person name="Fulton R.S."/>
            <person name="Fulton L.A."/>
            <person name="Clifton S.W."/>
            <person name="Wilson R.K."/>
            <person name="Knight R.D."/>
            <person name="Gordon J.I."/>
        </authorList>
    </citation>
    <scope>NUCLEOTIDE SEQUENCE [LARGE SCALE GENOMIC DNA]</scope>
    <source>
        <strain>ATCC 8482 / DSM 1447 / JCM 5826 / CCUG 4940 / NBRC 14291 / NCTC 11154</strain>
    </source>
</reference>
<name>Y1879_PHOV8</name>
<sequence>MAEHNEFGKEGEEEAAAYLIDKGYSIRHRNWHCGKKELDIVAEYRNELIVIEVKTRKNTRFGNPEDAVTDKKIRRIIASTDAYLRKFSVDLPVRFDIITLVGEKTPFTIEHIEEAFYPPIW</sequence>
<comment type="similarity">
    <text evidence="1">Belongs to the UPF0102 family.</text>
</comment>
<protein>
    <recommendedName>
        <fullName evidence="1">UPF0102 protein BVU_1879</fullName>
    </recommendedName>
</protein>
<accession>A6L1J0</accession>
<feature type="chain" id="PRO_1000009191" description="UPF0102 protein BVU_1879">
    <location>
        <begin position="1"/>
        <end position="121"/>
    </location>
</feature>
<organism>
    <name type="scientific">Phocaeicola vulgatus (strain ATCC 8482 / DSM 1447 / JCM 5826 / CCUG 4940 / NBRC 14291 / NCTC 11154)</name>
    <name type="common">Bacteroides vulgatus</name>
    <dbReference type="NCBI Taxonomy" id="435590"/>
    <lineage>
        <taxon>Bacteria</taxon>
        <taxon>Pseudomonadati</taxon>
        <taxon>Bacteroidota</taxon>
        <taxon>Bacteroidia</taxon>
        <taxon>Bacteroidales</taxon>
        <taxon>Bacteroidaceae</taxon>
        <taxon>Phocaeicola</taxon>
    </lineage>
</organism>
<proteinExistence type="inferred from homology"/>